<proteinExistence type="inferred from homology"/>
<sequence>MDWLAKYWWILVIVFLVGVLLNVIKDLKRVDHKKFLANKPELPPHRDFNDKWDDDDDWPKKDQPKK</sequence>
<gene>
    <name evidence="1" type="primary">ypfN</name>
    <name type="ordered locus">ECSE_2754</name>
</gene>
<organism>
    <name type="scientific">Escherichia coli (strain SE11)</name>
    <dbReference type="NCBI Taxonomy" id="409438"/>
    <lineage>
        <taxon>Bacteria</taxon>
        <taxon>Pseudomonadati</taxon>
        <taxon>Pseudomonadota</taxon>
        <taxon>Gammaproteobacteria</taxon>
        <taxon>Enterobacterales</taxon>
        <taxon>Enterobacteriaceae</taxon>
        <taxon>Escherichia</taxon>
    </lineage>
</organism>
<protein>
    <recommendedName>
        <fullName evidence="1">UPF0370 protein YpfN</fullName>
    </recommendedName>
</protein>
<comment type="subcellular location">
    <subcellularLocation>
        <location evidence="1">Cell membrane</location>
        <topology evidence="1">Single-pass membrane protein</topology>
    </subcellularLocation>
</comment>
<comment type="similarity">
    <text evidence="1">Belongs to the UPF0370 family.</text>
</comment>
<keyword id="KW-1003">Cell membrane</keyword>
<keyword id="KW-0472">Membrane</keyword>
<keyword id="KW-0812">Transmembrane</keyword>
<keyword id="KW-1133">Transmembrane helix</keyword>
<reference key="1">
    <citation type="journal article" date="2008" name="DNA Res.">
        <title>Complete genome sequence and comparative analysis of the wild-type commensal Escherichia coli strain SE11 isolated from a healthy adult.</title>
        <authorList>
            <person name="Oshima K."/>
            <person name="Toh H."/>
            <person name="Ogura Y."/>
            <person name="Sasamoto H."/>
            <person name="Morita H."/>
            <person name="Park S.-H."/>
            <person name="Ooka T."/>
            <person name="Iyoda S."/>
            <person name="Taylor T.D."/>
            <person name="Hayashi T."/>
            <person name="Itoh K."/>
            <person name="Hattori M."/>
        </authorList>
    </citation>
    <scope>NUCLEOTIDE SEQUENCE [LARGE SCALE GENOMIC DNA]</scope>
    <source>
        <strain>SE11</strain>
    </source>
</reference>
<feature type="chain" id="PRO_1000199719" description="UPF0370 protein YpfN">
    <location>
        <begin position="1"/>
        <end position="66"/>
    </location>
</feature>
<feature type="transmembrane region" description="Helical" evidence="1">
    <location>
        <begin position="4"/>
        <end position="24"/>
    </location>
</feature>
<feature type="region of interest" description="Disordered" evidence="2">
    <location>
        <begin position="39"/>
        <end position="66"/>
    </location>
</feature>
<feature type="compositionally biased region" description="Basic and acidic residues" evidence="2">
    <location>
        <begin position="42"/>
        <end position="51"/>
    </location>
</feature>
<name>YPFN_ECOSE</name>
<accession>B6I540</accession>
<dbReference type="EMBL" id="AP009240">
    <property type="protein sequence ID" value="BAG78278.1"/>
    <property type="molecule type" value="Genomic_DNA"/>
</dbReference>
<dbReference type="RefSeq" id="WP_000383836.1">
    <property type="nucleotide sequence ID" value="NC_011415.1"/>
</dbReference>
<dbReference type="SMR" id="B6I540"/>
<dbReference type="KEGG" id="ecy:ECSE_2754"/>
<dbReference type="HOGENOM" id="CLU_198936_0_0_6"/>
<dbReference type="Proteomes" id="UP000008199">
    <property type="component" value="Chromosome"/>
</dbReference>
<dbReference type="GO" id="GO:0005886">
    <property type="term" value="C:plasma membrane"/>
    <property type="evidence" value="ECO:0007669"/>
    <property type="project" value="UniProtKB-SubCell"/>
</dbReference>
<dbReference type="HAMAP" id="MF_01566">
    <property type="entry name" value="UPF0370"/>
    <property type="match status" value="1"/>
</dbReference>
<dbReference type="InterPro" id="IPR020910">
    <property type="entry name" value="UPF0370"/>
</dbReference>
<dbReference type="NCBIfam" id="NF010185">
    <property type="entry name" value="PRK13664.1"/>
    <property type="match status" value="1"/>
</dbReference>
<dbReference type="Pfam" id="PF13980">
    <property type="entry name" value="UPF0370"/>
    <property type="match status" value="1"/>
</dbReference>
<evidence type="ECO:0000255" key="1">
    <source>
        <dbReference type="HAMAP-Rule" id="MF_01566"/>
    </source>
</evidence>
<evidence type="ECO:0000256" key="2">
    <source>
        <dbReference type="SAM" id="MobiDB-lite"/>
    </source>
</evidence>